<protein>
    <recommendedName>
        <fullName evidence="1">Large ribosomal subunit protein uL2</fullName>
    </recommendedName>
    <alternativeName>
        <fullName evidence="3">50S ribosomal protein L2</fullName>
    </alternativeName>
</protein>
<accession>B0C1D6</accession>
<organism>
    <name type="scientific">Acaryochloris marina (strain MBIC 11017)</name>
    <dbReference type="NCBI Taxonomy" id="329726"/>
    <lineage>
        <taxon>Bacteria</taxon>
        <taxon>Bacillati</taxon>
        <taxon>Cyanobacteriota</taxon>
        <taxon>Cyanophyceae</taxon>
        <taxon>Acaryochloridales</taxon>
        <taxon>Acaryochloridaceae</taxon>
        <taxon>Acaryochloris</taxon>
    </lineage>
</organism>
<proteinExistence type="inferred from homology"/>
<feature type="chain" id="PRO_1000086315" description="Large ribosomal subunit protein uL2">
    <location>
        <begin position="1"/>
        <end position="287"/>
    </location>
</feature>
<feature type="region of interest" description="Disordered" evidence="2">
    <location>
        <begin position="209"/>
        <end position="287"/>
    </location>
</feature>
<feature type="compositionally biased region" description="Basic residues" evidence="2">
    <location>
        <begin position="209"/>
        <end position="220"/>
    </location>
</feature>
<feature type="compositionally biased region" description="Basic residues" evidence="2">
    <location>
        <begin position="258"/>
        <end position="287"/>
    </location>
</feature>
<keyword id="KW-1185">Reference proteome</keyword>
<keyword id="KW-0687">Ribonucleoprotein</keyword>
<keyword id="KW-0689">Ribosomal protein</keyword>
<keyword id="KW-0694">RNA-binding</keyword>
<keyword id="KW-0699">rRNA-binding</keyword>
<comment type="function">
    <text evidence="1">One of the primary rRNA binding proteins. Required for association of the 30S and 50S subunits to form the 70S ribosome, for tRNA binding and peptide bond formation. It has been suggested to have peptidyltransferase activity; this is somewhat controversial. Makes several contacts with the 16S rRNA in the 70S ribosome.</text>
</comment>
<comment type="subunit">
    <text evidence="1">Part of the 50S ribosomal subunit. Forms a bridge to the 30S subunit in the 70S ribosome.</text>
</comment>
<comment type="similarity">
    <text evidence="1">Belongs to the universal ribosomal protein uL2 family.</text>
</comment>
<sequence length="287" mass="31862">MGIRYYRPYTAGTRQKTSSDFAEITRDRPEKSLVKAKHRAKGRNNRGVITSRRRGGGHKRRYRIIDFYRNKLGVPGTIATVEYDPNRNARIALVNYKDGEKRYILHPRNVQVGTTIVAGPDAPIEVGNALPLERIPLGTEVHNVELIPGKGGQLARAAGALAQVVAKEGKMVTLKLPSGEVRLFQKECYATIGQVGNVESNNITIGKAGRNRWKARRPKVRGSVMNPVDHPHGGGEGRAPIGRSGPVTPWGKPTLGYKTRKKKKQSNKLIVRRRRRSSKRSRGGRQS</sequence>
<dbReference type="EMBL" id="CP000828">
    <property type="protein sequence ID" value="ABW29671.1"/>
    <property type="molecule type" value="Genomic_DNA"/>
</dbReference>
<dbReference type="RefSeq" id="WP_010469319.1">
    <property type="nucleotide sequence ID" value="NC_009925.1"/>
</dbReference>
<dbReference type="SMR" id="B0C1D6"/>
<dbReference type="STRING" id="329726.AM1_4699"/>
<dbReference type="KEGG" id="amr:AM1_4699"/>
<dbReference type="eggNOG" id="COG0090">
    <property type="taxonomic scope" value="Bacteria"/>
</dbReference>
<dbReference type="HOGENOM" id="CLU_036235_2_1_3"/>
<dbReference type="OrthoDB" id="9778722at2"/>
<dbReference type="Proteomes" id="UP000000268">
    <property type="component" value="Chromosome"/>
</dbReference>
<dbReference type="GO" id="GO:0015934">
    <property type="term" value="C:large ribosomal subunit"/>
    <property type="evidence" value="ECO:0007669"/>
    <property type="project" value="InterPro"/>
</dbReference>
<dbReference type="GO" id="GO:0019843">
    <property type="term" value="F:rRNA binding"/>
    <property type="evidence" value="ECO:0007669"/>
    <property type="project" value="UniProtKB-UniRule"/>
</dbReference>
<dbReference type="GO" id="GO:0003735">
    <property type="term" value="F:structural constituent of ribosome"/>
    <property type="evidence" value="ECO:0007669"/>
    <property type="project" value="InterPro"/>
</dbReference>
<dbReference type="GO" id="GO:0016740">
    <property type="term" value="F:transferase activity"/>
    <property type="evidence" value="ECO:0007669"/>
    <property type="project" value="InterPro"/>
</dbReference>
<dbReference type="GO" id="GO:0006412">
    <property type="term" value="P:translation"/>
    <property type="evidence" value="ECO:0007669"/>
    <property type="project" value="UniProtKB-UniRule"/>
</dbReference>
<dbReference type="FunFam" id="2.30.30.30:FF:000001">
    <property type="entry name" value="50S ribosomal protein L2"/>
    <property type="match status" value="1"/>
</dbReference>
<dbReference type="FunFam" id="2.40.50.140:FF:000003">
    <property type="entry name" value="50S ribosomal protein L2"/>
    <property type="match status" value="1"/>
</dbReference>
<dbReference type="FunFam" id="4.10.950.10:FF:000001">
    <property type="entry name" value="50S ribosomal protein L2"/>
    <property type="match status" value="1"/>
</dbReference>
<dbReference type="Gene3D" id="2.30.30.30">
    <property type="match status" value="1"/>
</dbReference>
<dbReference type="Gene3D" id="2.40.50.140">
    <property type="entry name" value="Nucleic acid-binding proteins"/>
    <property type="match status" value="1"/>
</dbReference>
<dbReference type="Gene3D" id="4.10.950.10">
    <property type="entry name" value="Ribosomal protein L2, domain 3"/>
    <property type="match status" value="1"/>
</dbReference>
<dbReference type="HAMAP" id="MF_01320_B">
    <property type="entry name" value="Ribosomal_uL2_B"/>
    <property type="match status" value="1"/>
</dbReference>
<dbReference type="InterPro" id="IPR012340">
    <property type="entry name" value="NA-bd_OB-fold"/>
</dbReference>
<dbReference type="InterPro" id="IPR014722">
    <property type="entry name" value="Rib_uL2_dom2"/>
</dbReference>
<dbReference type="InterPro" id="IPR002171">
    <property type="entry name" value="Ribosomal_uL2"/>
</dbReference>
<dbReference type="InterPro" id="IPR005880">
    <property type="entry name" value="Ribosomal_uL2_bac/org-type"/>
</dbReference>
<dbReference type="InterPro" id="IPR022669">
    <property type="entry name" value="Ribosomal_uL2_C"/>
</dbReference>
<dbReference type="InterPro" id="IPR022671">
    <property type="entry name" value="Ribosomal_uL2_CS"/>
</dbReference>
<dbReference type="InterPro" id="IPR014726">
    <property type="entry name" value="Ribosomal_uL2_dom3"/>
</dbReference>
<dbReference type="InterPro" id="IPR022666">
    <property type="entry name" value="Ribosomal_uL2_RNA-bd_dom"/>
</dbReference>
<dbReference type="InterPro" id="IPR008991">
    <property type="entry name" value="Translation_prot_SH3-like_sf"/>
</dbReference>
<dbReference type="NCBIfam" id="TIGR01171">
    <property type="entry name" value="rplB_bact"/>
    <property type="match status" value="1"/>
</dbReference>
<dbReference type="PANTHER" id="PTHR13691:SF5">
    <property type="entry name" value="LARGE RIBOSOMAL SUBUNIT PROTEIN UL2M"/>
    <property type="match status" value="1"/>
</dbReference>
<dbReference type="PANTHER" id="PTHR13691">
    <property type="entry name" value="RIBOSOMAL PROTEIN L2"/>
    <property type="match status" value="1"/>
</dbReference>
<dbReference type="Pfam" id="PF00181">
    <property type="entry name" value="Ribosomal_L2"/>
    <property type="match status" value="1"/>
</dbReference>
<dbReference type="Pfam" id="PF03947">
    <property type="entry name" value="Ribosomal_L2_C"/>
    <property type="match status" value="1"/>
</dbReference>
<dbReference type="PIRSF" id="PIRSF002158">
    <property type="entry name" value="Ribosomal_L2"/>
    <property type="match status" value="1"/>
</dbReference>
<dbReference type="SMART" id="SM01383">
    <property type="entry name" value="Ribosomal_L2"/>
    <property type="match status" value="1"/>
</dbReference>
<dbReference type="SMART" id="SM01382">
    <property type="entry name" value="Ribosomal_L2_C"/>
    <property type="match status" value="1"/>
</dbReference>
<dbReference type="SUPFAM" id="SSF50249">
    <property type="entry name" value="Nucleic acid-binding proteins"/>
    <property type="match status" value="1"/>
</dbReference>
<dbReference type="SUPFAM" id="SSF50104">
    <property type="entry name" value="Translation proteins SH3-like domain"/>
    <property type="match status" value="1"/>
</dbReference>
<dbReference type="PROSITE" id="PS00467">
    <property type="entry name" value="RIBOSOMAL_L2"/>
    <property type="match status" value="1"/>
</dbReference>
<reference key="1">
    <citation type="journal article" date="2008" name="Proc. Natl. Acad. Sci. U.S.A.">
        <title>Niche adaptation and genome expansion in the chlorophyll d-producing cyanobacterium Acaryochloris marina.</title>
        <authorList>
            <person name="Swingley W.D."/>
            <person name="Chen M."/>
            <person name="Cheung P.C."/>
            <person name="Conrad A.L."/>
            <person name="Dejesa L.C."/>
            <person name="Hao J."/>
            <person name="Honchak B.M."/>
            <person name="Karbach L.E."/>
            <person name="Kurdoglu A."/>
            <person name="Lahiri S."/>
            <person name="Mastrian S.D."/>
            <person name="Miyashita H."/>
            <person name="Page L."/>
            <person name="Ramakrishna P."/>
            <person name="Satoh S."/>
            <person name="Sattley W.M."/>
            <person name="Shimada Y."/>
            <person name="Taylor H.L."/>
            <person name="Tomo T."/>
            <person name="Tsuchiya T."/>
            <person name="Wang Z.T."/>
            <person name="Raymond J."/>
            <person name="Mimuro M."/>
            <person name="Blankenship R.E."/>
            <person name="Touchman J.W."/>
        </authorList>
    </citation>
    <scope>NUCLEOTIDE SEQUENCE [LARGE SCALE GENOMIC DNA]</scope>
    <source>
        <strain>MBIC 11017</strain>
    </source>
</reference>
<evidence type="ECO:0000255" key="1">
    <source>
        <dbReference type="HAMAP-Rule" id="MF_01320"/>
    </source>
</evidence>
<evidence type="ECO:0000256" key="2">
    <source>
        <dbReference type="SAM" id="MobiDB-lite"/>
    </source>
</evidence>
<evidence type="ECO:0000305" key="3"/>
<gene>
    <name evidence="1" type="primary">rplB</name>
    <name evidence="1" type="synonym">rpl2</name>
    <name type="ordered locus">AM1_4699</name>
</gene>
<name>RL2_ACAM1</name>